<protein>
    <recommendedName>
        <fullName evidence="1">DNA ligase</fullName>
        <ecNumber evidence="1">6.5.1.2</ecNumber>
    </recommendedName>
    <alternativeName>
        <fullName evidence="1">Polydeoxyribonucleotide synthase [NAD(+)]</fullName>
    </alternativeName>
</protein>
<feature type="chain" id="PRO_0000313511" description="DNA ligase">
    <location>
        <begin position="1"/>
        <end position="662"/>
    </location>
</feature>
<feature type="domain" description="BRCT" evidence="1">
    <location>
        <begin position="580"/>
        <end position="662"/>
    </location>
</feature>
<feature type="active site" description="N6-AMP-lysine intermediate" evidence="1">
    <location>
        <position position="108"/>
    </location>
</feature>
<feature type="binding site" evidence="1">
    <location>
        <begin position="32"/>
        <end position="36"/>
    </location>
    <ligand>
        <name>NAD(+)</name>
        <dbReference type="ChEBI" id="CHEBI:57540"/>
    </ligand>
</feature>
<feature type="binding site" evidence="1">
    <location>
        <begin position="75"/>
        <end position="76"/>
    </location>
    <ligand>
        <name>NAD(+)</name>
        <dbReference type="ChEBI" id="CHEBI:57540"/>
    </ligand>
</feature>
<feature type="binding site" evidence="1">
    <location>
        <position position="106"/>
    </location>
    <ligand>
        <name>NAD(+)</name>
        <dbReference type="ChEBI" id="CHEBI:57540"/>
    </ligand>
</feature>
<feature type="binding site" evidence="1">
    <location>
        <position position="129"/>
    </location>
    <ligand>
        <name>NAD(+)</name>
        <dbReference type="ChEBI" id="CHEBI:57540"/>
    </ligand>
</feature>
<feature type="binding site" evidence="1">
    <location>
        <position position="164"/>
    </location>
    <ligand>
        <name>NAD(+)</name>
        <dbReference type="ChEBI" id="CHEBI:57540"/>
    </ligand>
</feature>
<feature type="binding site" evidence="1">
    <location>
        <position position="271"/>
    </location>
    <ligand>
        <name>NAD(+)</name>
        <dbReference type="ChEBI" id="CHEBI:57540"/>
    </ligand>
</feature>
<feature type="binding site" evidence="1">
    <location>
        <position position="295"/>
    </location>
    <ligand>
        <name>NAD(+)</name>
        <dbReference type="ChEBI" id="CHEBI:57540"/>
    </ligand>
</feature>
<feature type="binding site" evidence="1">
    <location>
        <position position="389"/>
    </location>
    <ligand>
        <name>Zn(2+)</name>
        <dbReference type="ChEBI" id="CHEBI:29105"/>
    </ligand>
</feature>
<feature type="binding site" evidence="1">
    <location>
        <position position="392"/>
    </location>
    <ligand>
        <name>Zn(2+)</name>
        <dbReference type="ChEBI" id="CHEBI:29105"/>
    </ligand>
</feature>
<feature type="binding site" evidence="1">
    <location>
        <position position="407"/>
    </location>
    <ligand>
        <name>Zn(2+)</name>
        <dbReference type="ChEBI" id="CHEBI:29105"/>
    </ligand>
</feature>
<feature type="binding site" evidence="1">
    <location>
        <position position="413"/>
    </location>
    <ligand>
        <name>Zn(2+)</name>
        <dbReference type="ChEBI" id="CHEBI:29105"/>
    </ligand>
</feature>
<reference key="1">
    <citation type="journal article" date="2004" name="PLoS Biol.">
        <title>Phylogenomics of the reproductive parasite Wolbachia pipientis wMel: a streamlined genome overrun by mobile genetic elements.</title>
        <authorList>
            <person name="Wu M."/>
            <person name="Sun L.V."/>
            <person name="Vamathevan J.J."/>
            <person name="Riegler M."/>
            <person name="DeBoy R.T."/>
            <person name="Brownlie J.C."/>
            <person name="McGraw E.A."/>
            <person name="Martin W."/>
            <person name="Esser C."/>
            <person name="Ahmadinejad N."/>
            <person name="Wiegand C."/>
            <person name="Madupu R."/>
            <person name="Beanan M.J."/>
            <person name="Brinkac L.M."/>
            <person name="Daugherty S.C."/>
            <person name="Durkin A.S."/>
            <person name="Kolonay J.F."/>
            <person name="Nelson W.C."/>
            <person name="Mohamoud Y."/>
            <person name="Lee P."/>
            <person name="Berry K.J."/>
            <person name="Young M.B."/>
            <person name="Utterback T.R."/>
            <person name="Weidman J.F."/>
            <person name="Nierman W.C."/>
            <person name="Paulsen I.T."/>
            <person name="Nelson K.E."/>
            <person name="Tettelin H."/>
            <person name="O'Neill S.L."/>
            <person name="Eisen J.A."/>
        </authorList>
    </citation>
    <scope>NUCLEOTIDE SEQUENCE [LARGE SCALE GENOMIC DNA]</scope>
</reference>
<comment type="function">
    <text evidence="1">DNA ligase that catalyzes the formation of phosphodiester linkages between 5'-phosphoryl and 3'-hydroxyl groups in double-stranded DNA using NAD as a coenzyme and as the energy source for the reaction. It is essential for DNA replication and repair of damaged DNA.</text>
</comment>
<comment type="catalytic activity">
    <reaction evidence="1">
        <text>NAD(+) + (deoxyribonucleotide)n-3'-hydroxyl + 5'-phospho-(deoxyribonucleotide)m = (deoxyribonucleotide)n+m + AMP + beta-nicotinamide D-nucleotide.</text>
        <dbReference type="EC" id="6.5.1.2"/>
    </reaction>
</comment>
<comment type="cofactor">
    <cofactor evidence="1">
        <name>Mg(2+)</name>
        <dbReference type="ChEBI" id="CHEBI:18420"/>
    </cofactor>
    <cofactor evidence="1">
        <name>Mn(2+)</name>
        <dbReference type="ChEBI" id="CHEBI:29035"/>
    </cofactor>
</comment>
<comment type="similarity">
    <text evidence="1">Belongs to the NAD-dependent DNA ligase family. LigA subfamily.</text>
</comment>
<gene>
    <name evidence="1" type="primary">ligA</name>
    <name type="ordered locus">WD_0776</name>
</gene>
<keyword id="KW-0227">DNA damage</keyword>
<keyword id="KW-0234">DNA repair</keyword>
<keyword id="KW-0235">DNA replication</keyword>
<keyword id="KW-0436">Ligase</keyword>
<keyword id="KW-0460">Magnesium</keyword>
<keyword id="KW-0464">Manganese</keyword>
<keyword id="KW-0479">Metal-binding</keyword>
<keyword id="KW-0520">NAD</keyword>
<keyword id="KW-0862">Zinc</keyword>
<proteinExistence type="inferred from homology"/>
<accession>Q73H01</accession>
<name>DNLJ_WOLPM</name>
<dbReference type="EC" id="6.5.1.2" evidence="1"/>
<dbReference type="EMBL" id="AE017196">
    <property type="protein sequence ID" value="AAS14465.1"/>
    <property type="molecule type" value="Genomic_DNA"/>
</dbReference>
<dbReference type="RefSeq" id="WP_010962827.1">
    <property type="nucleotide sequence ID" value="NZ_OX384529.1"/>
</dbReference>
<dbReference type="SMR" id="Q73H01"/>
<dbReference type="EnsemblBacteria" id="AAS14465">
    <property type="protein sequence ID" value="AAS14465"/>
    <property type="gene ID" value="WD_0776"/>
</dbReference>
<dbReference type="GeneID" id="70036257"/>
<dbReference type="KEGG" id="wol:WD_0776"/>
<dbReference type="eggNOG" id="COG0272">
    <property type="taxonomic scope" value="Bacteria"/>
</dbReference>
<dbReference type="Proteomes" id="UP000008215">
    <property type="component" value="Chromosome"/>
</dbReference>
<dbReference type="GO" id="GO:0005829">
    <property type="term" value="C:cytosol"/>
    <property type="evidence" value="ECO:0007669"/>
    <property type="project" value="TreeGrafter"/>
</dbReference>
<dbReference type="GO" id="GO:0003911">
    <property type="term" value="F:DNA ligase (NAD+) activity"/>
    <property type="evidence" value="ECO:0007669"/>
    <property type="project" value="UniProtKB-UniRule"/>
</dbReference>
<dbReference type="GO" id="GO:0046872">
    <property type="term" value="F:metal ion binding"/>
    <property type="evidence" value="ECO:0007669"/>
    <property type="project" value="UniProtKB-KW"/>
</dbReference>
<dbReference type="GO" id="GO:0006281">
    <property type="term" value="P:DNA repair"/>
    <property type="evidence" value="ECO:0007669"/>
    <property type="project" value="UniProtKB-KW"/>
</dbReference>
<dbReference type="GO" id="GO:0006260">
    <property type="term" value="P:DNA replication"/>
    <property type="evidence" value="ECO:0007669"/>
    <property type="project" value="UniProtKB-KW"/>
</dbReference>
<dbReference type="CDD" id="cd17748">
    <property type="entry name" value="BRCT_DNA_ligase_like"/>
    <property type="match status" value="1"/>
</dbReference>
<dbReference type="CDD" id="cd00114">
    <property type="entry name" value="LIGANc"/>
    <property type="match status" value="1"/>
</dbReference>
<dbReference type="FunFam" id="1.10.150.20:FF:000007">
    <property type="entry name" value="DNA ligase"/>
    <property type="match status" value="1"/>
</dbReference>
<dbReference type="FunFam" id="2.40.50.140:FF:000012">
    <property type="entry name" value="DNA ligase"/>
    <property type="match status" value="1"/>
</dbReference>
<dbReference type="Gene3D" id="6.20.10.30">
    <property type="match status" value="1"/>
</dbReference>
<dbReference type="Gene3D" id="1.10.150.20">
    <property type="entry name" value="5' to 3' exonuclease, C-terminal subdomain"/>
    <property type="match status" value="2"/>
</dbReference>
<dbReference type="Gene3D" id="3.40.50.10190">
    <property type="entry name" value="BRCT domain"/>
    <property type="match status" value="1"/>
</dbReference>
<dbReference type="Gene3D" id="3.30.470.30">
    <property type="entry name" value="DNA ligase/mRNA capping enzyme"/>
    <property type="match status" value="1"/>
</dbReference>
<dbReference type="Gene3D" id="1.10.287.610">
    <property type="entry name" value="Helix hairpin bin"/>
    <property type="match status" value="1"/>
</dbReference>
<dbReference type="Gene3D" id="2.40.50.140">
    <property type="entry name" value="Nucleic acid-binding proteins"/>
    <property type="match status" value="1"/>
</dbReference>
<dbReference type="HAMAP" id="MF_01588">
    <property type="entry name" value="DNA_ligase_A"/>
    <property type="match status" value="1"/>
</dbReference>
<dbReference type="InterPro" id="IPR001357">
    <property type="entry name" value="BRCT_dom"/>
</dbReference>
<dbReference type="InterPro" id="IPR036420">
    <property type="entry name" value="BRCT_dom_sf"/>
</dbReference>
<dbReference type="InterPro" id="IPR041663">
    <property type="entry name" value="DisA/LigA_HHH"/>
</dbReference>
<dbReference type="InterPro" id="IPR001679">
    <property type="entry name" value="DNA_ligase"/>
</dbReference>
<dbReference type="InterPro" id="IPR018239">
    <property type="entry name" value="DNA_ligase_AS"/>
</dbReference>
<dbReference type="InterPro" id="IPR033136">
    <property type="entry name" value="DNA_ligase_CS"/>
</dbReference>
<dbReference type="InterPro" id="IPR013839">
    <property type="entry name" value="DNAligase_adenylation"/>
</dbReference>
<dbReference type="InterPro" id="IPR013840">
    <property type="entry name" value="DNAligase_N"/>
</dbReference>
<dbReference type="InterPro" id="IPR012340">
    <property type="entry name" value="NA-bd_OB-fold"/>
</dbReference>
<dbReference type="InterPro" id="IPR004150">
    <property type="entry name" value="NAD_DNA_ligase_OB"/>
</dbReference>
<dbReference type="InterPro" id="IPR010994">
    <property type="entry name" value="RuvA_2-like"/>
</dbReference>
<dbReference type="InterPro" id="IPR004149">
    <property type="entry name" value="Znf_DNAligase_C4"/>
</dbReference>
<dbReference type="NCBIfam" id="TIGR00575">
    <property type="entry name" value="dnlj"/>
    <property type="match status" value="1"/>
</dbReference>
<dbReference type="NCBIfam" id="NF005932">
    <property type="entry name" value="PRK07956.1"/>
    <property type="match status" value="1"/>
</dbReference>
<dbReference type="PANTHER" id="PTHR23389">
    <property type="entry name" value="CHROMOSOME TRANSMISSION FIDELITY FACTOR 18"/>
    <property type="match status" value="1"/>
</dbReference>
<dbReference type="PANTHER" id="PTHR23389:SF9">
    <property type="entry name" value="DNA LIGASE"/>
    <property type="match status" value="1"/>
</dbReference>
<dbReference type="Pfam" id="PF00533">
    <property type="entry name" value="BRCT"/>
    <property type="match status" value="1"/>
</dbReference>
<dbReference type="Pfam" id="PF01653">
    <property type="entry name" value="DNA_ligase_aden"/>
    <property type="match status" value="1"/>
</dbReference>
<dbReference type="Pfam" id="PF03120">
    <property type="entry name" value="DNA_ligase_OB"/>
    <property type="match status" value="1"/>
</dbReference>
<dbReference type="Pfam" id="PF03119">
    <property type="entry name" value="DNA_ligase_ZBD"/>
    <property type="match status" value="1"/>
</dbReference>
<dbReference type="Pfam" id="PF12826">
    <property type="entry name" value="HHH_2"/>
    <property type="match status" value="1"/>
</dbReference>
<dbReference type="Pfam" id="PF22745">
    <property type="entry name" value="Nlig-Ia"/>
    <property type="match status" value="1"/>
</dbReference>
<dbReference type="PIRSF" id="PIRSF001604">
    <property type="entry name" value="LigA"/>
    <property type="match status" value="1"/>
</dbReference>
<dbReference type="SMART" id="SM00292">
    <property type="entry name" value="BRCT"/>
    <property type="match status" value="1"/>
</dbReference>
<dbReference type="SMART" id="SM00532">
    <property type="entry name" value="LIGANc"/>
    <property type="match status" value="1"/>
</dbReference>
<dbReference type="SUPFAM" id="SSF52113">
    <property type="entry name" value="BRCT domain"/>
    <property type="match status" value="1"/>
</dbReference>
<dbReference type="SUPFAM" id="SSF56091">
    <property type="entry name" value="DNA ligase/mRNA capping enzyme, catalytic domain"/>
    <property type="match status" value="1"/>
</dbReference>
<dbReference type="SUPFAM" id="SSF50249">
    <property type="entry name" value="Nucleic acid-binding proteins"/>
    <property type="match status" value="1"/>
</dbReference>
<dbReference type="SUPFAM" id="SSF47781">
    <property type="entry name" value="RuvA domain 2-like"/>
    <property type="match status" value="1"/>
</dbReference>
<dbReference type="PROSITE" id="PS50172">
    <property type="entry name" value="BRCT"/>
    <property type="match status" value="1"/>
</dbReference>
<dbReference type="PROSITE" id="PS01055">
    <property type="entry name" value="DNA_LIGASE_N1"/>
    <property type="match status" value="1"/>
</dbReference>
<dbReference type="PROSITE" id="PS01056">
    <property type="entry name" value="DNA_LIGASE_N2"/>
    <property type="match status" value="1"/>
</dbReference>
<organism>
    <name type="scientific">Wolbachia pipientis wMel</name>
    <dbReference type="NCBI Taxonomy" id="163164"/>
    <lineage>
        <taxon>Bacteria</taxon>
        <taxon>Pseudomonadati</taxon>
        <taxon>Pseudomonadota</taxon>
        <taxon>Alphaproteobacteria</taxon>
        <taxon>Rickettsiales</taxon>
        <taxon>Anaplasmataceae</taxon>
        <taxon>Wolbachieae</taxon>
        <taxon>Wolbachia</taxon>
    </lineage>
</organism>
<evidence type="ECO:0000255" key="1">
    <source>
        <dbReference type="HAMAP-Rule" id="MF_01588"/>
    </source>
</evidence>
<sequence length="662" mass="74348">MTNLEKMREKLQDQINYHNVLYHQKNKPEISDAEYDELKKKLAEIEPEIYATQDSVGAPPDERFSKVEHQEPMLSLENAYDEQGVEKFLSKIKRFLIEDKIEILCEPKIDGLSFSAIYEDGRFVKAATRGDGFVGEDVTHNVATIKGFPKFLQGVQGRLEVRGEIYISNSDFLKLNENDEFANPRNAAAGSLKQLDANITASRPLRYFAYSLIGGAEKSQSEVLNKLEALGFCVNEHQSLTSSLDGMLKFYNEVYNCRYNLDYDIDGIVYKVNDLVLQNRLGNTHKAPRSALAYKFSAVYAKTKLNKIFIQVGRTGVLTPVADLVPVNVGGVLVSRASLHNQDEIKRKDIREGDIVTIKRAGDVIPQIVEVSRDSRLPNTPEFVFPEVCPECGSKVRQVEGEAAVRCPEEFACKAQMIEKLKHFVSKDAFDIVGLGDKQIEFFYDLGLIKQIHDIFTLEERLDEFNLEEQSGWGEKSIANLLNSIQSRRVITLDRFIFSLGIRFIGQVAAELLADYYVSYNNWYNSMIELSLDNTELVGIDGIGKKGAESLESFFSKEHNIKMLNDLTACLQILPVSSNSSNSVLNNKIIVFTGKLLAMSRGEAKVRAKTLGAKVSSHLSAKTDYLIAGEKPGSKYKKAVELGVEILDEDQWHKVISLGVFK</sequence>